<protein>
    <recommendedName>
        <fullName evidence="1">Cell division topological specificity factor</fullName>
    </recommendedName>
</protein>
<sequence length="88" mass="10221">MALLDFFLSRKKNTANIAKERLQIIVAERRRSDAEPHYLPQLRKDILDVICKYVQIDPEMVTVQLEQKDGDISILELNVTLPEAEELK</sequence>
<organism>
    <name type="scientific">Escherichia fergusonii (strain ATCC 35469 / DSM 13698 / CCUG 18766 / IAM 14443 / JCM 21226 / LMG 7866 / NBRC 102419 / NCTC 12128 / CDC 0568-73)</name>
    <dbReference type="NCBI Taxonomy" id="585054"/>
    <lineage>
        <taxon>Bacteria</taxon>
        <taxon>Pseudomonadati</taxon>
        <taxon>Pseudomonadota</taxon>
        <taxon>Gammaproteobacteria</taxon>
        <taxon>Enterobacterales</taxon>
        <taxon>Enterobacteriaceae</taxon>
        <taxon>Escherichia</taxon>
    </lineage>
</organism>
<accession>B7LSK7</accession>
<gene>
    <name evidence="1" type="primary">minE</name>
    <name type="ordered locus">EFER_1778</name>
</gene>
<proteinExistence type="inferred from homology"/>
<comment type="function">
    <text evidence="1">Prevents the cell division inhibition by proteins MinC and MinD at internal division sites while permitting inhibition at polar sites. This ensures cell division at the proper site by restricting the formation of a division septum at the midpoint of the long axis of the cell.</text>
</comment>
<comment type="similarity">
    <text evidence="1">Belongs to the MinE family.</text>
</comment>
<feature type="chain" id="PRO_1000191285" description="Cell division topological specificity factor">
    <location>
        <begin position="1"/>
        <end position="88"/>
    </location>
</feature>
<reference key="1">
    <citation type="journal article" date="2009" name="PLoS Genet.">
        <title>Organised genome dynamics in the Escherichia coli species results in highly diverse adaptive paths.</title>
        <authorList>
            <person name="Touchon M."/>
            <person name="Hoede C."/>
            <person name="Tenaillon O."/>
            <person name="Barbe V."/>
            <person name="Baeriswyl S."/>
            <person name="Bidet P."/>
            <person name="Bingen E."/>
            <person name="Bonacorsi S."/>
            <person name="Bouchier C."/>
            <person name="Bouvet O."/>
            <person name="Calteau A."/>
            <person name="Chiapello H."/>
            <person name="Clermont O."/>
            <person name="Cruveiller S."/>
            <person name="Danchin A."/>
            <person name="Diard M."/>
            <person name="Dossat C."/>
            <person name="Karoui M.E."/>
            <person name="Frapy E."/>
            <person name="Garry L."/>
            <person name="Ghigo J.M."/>
            <person name="Gilles A.M."/>
            <person name="Johnson J."/>
            <person name="Le Bouguenec C."/>
            <person name="Lescat M."/>
            <person name="Mangenot S."/>
            <person name="Martinez-Jehanne V."/>
            <person name="Matic I."/>
            <person name="Nassif X."/>
            <person name="Oztas S."/>
            <person name="Petit M.A."/>
            <person name="Pichon C."/>
            <person name="Rouy Z."/>
            <person name="Ruf C.S."/>
            <person name="Schneider D."/>
            <person name="Tourret J."/>
            <person name="Vacherie B."/>
            <person name="Vallenet D."/>
            <person name="Medigue C."/>
            <person name="Rocha E.P.C."/>
            <person name="Denamur E."/>
        </authorList>
    </citation>
    <scope>NUCLEOTIDE SEQUENCE [LARGE SCALE GENOMIC DNA]</scope>
    <source>
        <strain>ATCC 35469 / DSM 13698 / BCRC 15582 / CCUG 18766 / IAM 14443 / JCM 21226 / LMG 7866 / NBRC 102419 / NCTC 12128 / CDC 0568-73</strain>
    </source>
</reference>
<keyword id="KW-0131">Cell cycle</keyword>
<keyword id="KW-0132">Cell division</keyword>
<evidence type="ECO:0000255" key="1">
    <source>
        <dbReference type="HAMAP-Rule" id="MF_00262"/>
    </source>
</evidence>
<name>MINE_ESCF3</name>
<dbReference type="EMBL" id="CU928158">
    <property type="protein sequence ID" value="CAQ89293.1"/>
    <property type="molecule type" value="Genomic_DNA"/>
</dbReference>
<dbReference type="RefSeq" id="WP_001185664.1">
    <property type="nucleotide sequence ID" value="NC_011740.1"/>
</dbReference>
<dbReference type="SMR" id="B7LSK7"/>
<dbReference type="GeneID" id="86946098"/>
<dbReference type="KEGG" id="efe:EFER_1778"/>
<dbReference type="HOGENOM" id="CLU_137929_2_2_6"/>
<dbReference type="OrthoDB" id="9802655at2"/>
<dbReference type="Proteomes" id="UP000000745">
    <property type="component" value="Chromosome"/>
</dbReference>
<dbReference type="GO" id="GO:0051301">
    <property type="term" value="P:cell division"/>
    <property type="evidence" value="ECO:0007669"/>
    <property type="project" value="UniProtKB-KW"/>
</dbReference>
<dbReference type="GO" id="GO:0032955">
    <property type="term" value="P:regulation of division septum assembly"/>
    <property type="evidence" value="ECO:0007669"/>
    <property type="project" value="InterPro"/>
</dbReference>
<dbReference type="FunFam" id="3.30.1070.10:FF:000001">
    <property type="entry name" value="Cell division topological specificity factor"/>
    <property type="match status" value="1"/>
</dbReference>
<dbReference type="Gene3D" id="3.30.1070.10">
    <property type="entry name" value="Cell division topological specificity factor MinE"/>
    <property type="match status" value="1"/>
</dbReference>
<dbReference type="HAMAP" id="MF_00262">
    <property type="entry name" value="MinE"/>
    <property type="match status" value="1"/>
</dbReference>
<dbReference type="InterPro" id="IPR005527">
    <property type="entry name" value="MinE"/>
</dbReference>
<dbReference type="InterPro" id="IPR036707">
    <property type="entry name" value="MinE_sf"/>
</dbReference>
<dbReference type="NCBIfam" id="TIGR01215">
    <property type="entry name" value="minE"/>
    <property type="match status" value="1"/>
</dbReference>
<dbReference type="NCBIfam" id="NF001422">
    <property type="entry name" value="PRK00296.1"/>
    <property type="match status" value="1"/>
</dbReference>
<dbReference type="Pfam" id="PF03776">
    <property type="entry name" value="MinE"/>
    <property type="match status" value="1"/>
</dbReference>
<dbReference type="SUPFAM" id="SSF55229">
    <property type="entry name" value="Cell division protein MinE topological specificity domain"/>
    <property type="match status" value="1"/>
</dbReference>